<name>PSBP3_TOBAC</name>
<dbReference type="EMBL" id="X62427">
    <property type="protein sequence ID" value="CAA44293.1"/>
    <property type="molecule type" value="mRNA"/>
</dbReference>
<dbReference type="PIR" id="S17446">
    <property type="entry name" value="S17446"/>
</dbReference>
<dbReference type="RefSeq" id="NP_001313167.1">
    <property type="nucleotide sequence ID" value="NM_001326238.1"/>
</dbReference>
<dbReference type="SMR" id="Q04127"/>
<dbReference type="STRING" id="4097.Q04127"/>
<dbReference type="PaxDb" id="4097-Q04127"/>
<dbReference type="GeneID" id="107830202"/>
<dbReference type="KEGG" id="nta:107830202"/>
<dbReference type="OMA" id="SIADYGX"/>
<dbReference type="OrthoDB" id="507333at2759"/>
<dbReference type="PhylomeDB" id="Q04127"/>
<dbReference type="Proteomes" id="UP000084051">
    <property type="component" value="Unplaced"/>
</dbReference>
<dbReference type="GO" id="GO:0009535">
    <property type="term" value="C:chloroplast thylakoid membrane"/>
    <property type="evidence" value="ECO:0007669"/>
    <property type="project" value="UniProtKB-SubCell"/>
</dbReference>
<dbReference type="GO" id="GO:0019898">
    <property type="term" value="C:extrinsic component of membrane"/>
    <property type="evidence" value="ECO:0007669"/>
    <property type="project" value="InterPro"/>
</dbReference>
<dbReference type="GO" id="GO:0009654">
    <property type="term" value="C:photosystem II oxygen evolving complex"/>
    <property type="evidence" value="ECO:0007669"/>
    <property type="project" value="InterPro"/>
</dbReference>
<dbReference type="GO" id="GO:0005509">
    <property type="term" value="F:calcium ion binding"/>
    <property type="evidence" value="ECO:0007669"/>
    <property type="project" value="InterPro"/>
</dbReference>
<dbReference type="GO" id="GO:0015979">
    <property type="term" value="P:photosynthesis"/>
    <property type="evidence" value="ECO:0007669"/>
    <property type="project" value="UniProtKB-KW"/>
</dbReference>
<dbReference type="Gene3D" id="3.40.1000.10">
    <property type="entry name" value="Mog1/PsbP, alpha/beta/alpha sandwich"/>
    <property type="match status" value="1"/>
</dbReference>
<dbReference type="InterPro" id="IPR016123">
    <property type="entry name" value="Mog1/PsbP_a/b/a-sand"/>
</dbReference>
<dbReference type="InterPro" id="IPR002683">
    <property type="entry name" value="PsbP_C"/>
</dbReference>
<dbReference type="PANTHER" id="PTHR31407">
    <property type="match status" value="1"/>
</dbReference>
<dbReference type="PANTHER" id="PTHR31407:SF6">
    <property type="entry name" value="OXYGEN-EVOLVING ENHANCER PROTEIN 2-1, CHLOROPLASTIC"/>
    <property type="match status" value="1"/>
</dbReference>
<dbReference type="Pfam" id="PF01789">
    <property type="entry name" value="PsbP"/>
    <property type="match status" value="1"/>
</dbReference>
<dbReference type="SUPFAM" id="SSF55724">
    <property type="entry name" value="Mog1p/PsbP-like"/>
    <property type="match status" value="1"/>
</dbReference>
<protein>
    <recommendedName>
        <fullName>Oxygen-evolving enhancer protein 2-3, chloroplastic</fullName>
        <shortName>OEE2</shortName>
    </recommendedName>
    <alternativeName>
        <fullName>23 kDa subunit of oxygen evolving system of photosystem II</fullName>
    </alternativeName>
    <alternativeName>
        <fullName>23 kDa thylakoid membrane protein</fullName>
    </alternativeName>
    <alternativeName>
        <fullName>OEC 23 kDa subunit</fullName>
    </alternativeName>
</protein>
<proteinExistence type="evidence at transcript level"/>
<reference key="1">
    <citation type="journal article" date="1992" name="Plant Mol. Biol.">
        <title>Photosystem II 23 kDa polypeptide of oxygen-evolving complex is encoded by a multigene family in tobacco.</title>
        <authorList>
            <person name="Hua S.B."/>
            <person name="Dube S.K."/>
            <person name="Barnett N.M."/>
            <person name="Kung S.D."/>
        </authorList>
    </citation>
    <scope>NUCLEOTIDE SEQUENCE [MRNA]</scope>
    <source>
        <strain>cv. SR1</strain>
        <tissue>Leaf</tissue>
    </source>
</reference>
<sequence>MASTQCFLHHHALSTPARTSLVRGIVPSLKSNQLLVCRAQNKQSAPQQDNVNSVSVSRRLALTLLIGAAAVGSKVSPADAAYGEAANVFGKPKTDTDFQTYNGDGFKLQIPSKWNPNKEVEYPGQVLRFEDNFDATSNVIVAITPTDKKSITDFGSPEQFLSQVDYLLGRQAYSGKTDSEGGFESDAVAIANVLETSTAEVGGKQYYYLSILTRTADGNEGGKHQLVTATVNDGKLYICKAQAGDKRWFKGAKKFVENTATSFSLA</sequence>
<comment type="function">
    <text evidence="1">May be involved in the regulation of photosystem II.</text>
</comment>
<comment type="subcellular location">
    <subcellularLocation>
        <location evidence="1">Plastid</location>
        <location evidence="1">Chloroplast thylakoid membrane</location>
    </subcellularLocation>
    <text evidence="1">Associated with the photosystem II complex.</text>
</comment>
<comment type="similarity">
    <text evidence="3">Belongs to the PsbP family.</text>
</comment>
<gene>
    <name type="primary">PSBP3</name>
    <name type="synonym">OEE2-AF</name>
</gene>
<accession>Q04127</accession>
<feature type="transit peptide" description="Chloroplast" evidence="2">
    <location>
        <begin position="1"/>
        <end position="80"/>
    </location>
</feature>
<feature type="chain" id="PRO_0000029585" description="Oxygen-evolving enhancer protein 2-3, chloroplastic">
    <location>
        <begin position="81"/>
        <end position="266"/>
    </location>
</feature>
<organism>
    <name type="scientific">Nicotiana tabacum</name>
    <name type="common">Common tobacco</name>
    <dbReference type="NCBI Taxonomy" id="4097"/>
    <lineage>
        <taxon>Eukaryota</taxon>
        <taxon>Viridiplantae</taxon>
        <taxon>Streptophyta</taxon>
        <taxon>Embryophyta</taxon>
        <taxon>Tracheophyta</taxon>
        <taxon>Spermatophyta</taxon>
        <taxon>Magnoliopsida</taxon>
        <taxon>eudicotyledons</taxon>
        <taxon>Gunneridae</taxon>
        <taxon>Pentapetalae</taxon>
        <taxon>asterids</taxon>
        <taxon>lamiids</taxon>
        <taxon>Solanales</taxon>
        <taxon>Solanaceae</taxon>
        <taxon>Nicotianoideae</taxon>
        <taxon>Nicotianeae</taxon>
        <taxon>Nicotiana</taxon>
    </lineage>
</organism>
<evidence type="ECO:0000250" key="1"/>
<evidence type="ECO:0000255" key="2"/>
<evidence type="ECO:0000305" key="3"/>
<keyword id="KW-0150">Chloroplast</keyword>
<keyword id="KW-0472">Membrane</keyword>
<keyword id="KW-0602">Photosynthesis</keyword>
<keyword id="KW-0604">Photosystem II</keyword>
<keyword id="KW-0934">Plastid</keyword>
<keyword id="KW-1185">Reference proteome</keyword>
<keyword id="KW-0793">Thylakoid</keyword>
<keyword id="KW-0809">Transit peptide</keyword>